<sequence length="508" mass="55424">MVSINIRPDEIGSIIRKQIEEYIQEVKVVNIGTVLQVGDGIARIYGLDEVMAGELLEFEDGTVGIALNLESDNVGAVLMGDGLTIQEGGSVKATGKIAQIPVSNAYLGRVVNALAQPIDGKGQISASESRLIESPAPGIISRRSVYEPMQTGLIAIDSMIPIGRGQRELIIGDRQTGKTAVATDTILNQKGQNVTCVYVAIGQKASSVAQVVNTFQERGAMEYTIVVAEMADSPATLQYLAPYTGAALAEYFMYRKQHTLIIYDDLSKQAQAYRQMSLLLRRPPGREAYPGDVFYLHSRLLERAAKLSSQLGEGSMTALPIVETQAGDVSAYIPTNVISITDGQIFLSADLFNAGIRPAINVGISVSRVGSAAQIKAMKQVAGKLKLELAQFAELEAFAQFASDLDRATQNQLARGQRLRELLKQSQSAPLSVEEQVATIYTGVNGYLDILKVEQVKRFLVQLREYLVTNKPQFGEIIRSTKIFTEDAESILRVAIREYTELFLLQEK</sequence>
<organism>
    <name type="scientific">Psilotum nudum</name>
    <name type="common">Whisk fern</name>
    <name type="synonym">Lycopodium nudum</name>
    <dbReference type="NCBI Taxonomy" id="3240"/>
    <lineage>
        <taxon>Eukaryota</taxon>
        <taxon>Viridiplantae</taxon>
        <taxon>Streptophyta</taxon>
        <taxon>Embryophyta</taxon>
        <taxon>Tracheophyta</taxon>
        <taxon>Polypodiopsida</taxon>
        <taxon>Ophioglossidae</taxon>
        <taxon>Psilotales</taxon>
        <taxon>Psilotaceae</taxon>
        <taxon>Psilotum</taxon>
    </lineage>
</organism>
<reference key="1">
    <citation type="journal article" date="2004" name="Mol. Biol. Evol.">
        <title>Chloroplast phylogeny indicates that bryophytes are monophyletic.</title>
        <authorList>
            <person name="Nishiyama T."/>
            <person name="Wolf P.G."/>
            <person name="Kugita M."/>
            <person name="Sinclair R.B."/>
            <person name="Sugita M."/>
            <person name="Sugiura C."/>
            <person name="Wakasugi T."/>
            <person name="Yamada K."/>
            <person name="Yoshinaga K."/>
            <person name="Yamaguchi K."/>
            <person name="Ueda K."/>
            <person name="Hasebe M."/>
        </authorList>
    </citation>
    <scope>NUCLEOTIDE SEQUENCE [LARGE SCALE GENOMIC DNA]</scope>
    <source>
        <strain>Kingyoku</strain>
    </source>
</reference>
<name>ATPA_PSINU</name>
<protein>
    <recommendedName>
        <fullName evidence="1">ATP synthase subunit alpha, chloroplastic</fullName>
        <ecNumber evidence="1">7.1.2.2</ecNumber>
    </recommendedName>
    <alternativeName>
        <fullName evidence="1">ATP synthase F1 sector subunit alpha</fullName>
    </alternativeName>
    <alternativeName>
        <fullName evidence="1">F-ATPase subunit alpha</fullName>
    </alternativeName>
</protein>
<accession>Q8WI30</accession>
<feature type="chain" id="PRO_0000238438" description="ATP synthase subunit alpha, chloroplastic">
    <location>
        <begin position="1"/>
        <end position="508"/>
    </location>
</feature>
<feature type="binding site" evidence="1">
    <location>
        <begin position="172"/>
        <end position="179"/>
    </location>
    <ligand>
        <name>ATP</name>
        <dbReference type="ChEBI" id="CHEBI:30616"/>
    </ligand>
</feature>
<feature type="site" description="Required for activity" evidence="1">
    <location>
        <position position="365"/>
    </location>
</feature>
<comment type="function">
    <text evidence="1">Produces ATP from ADP in the presence of a proton gradient across the membrane. The alpha chain is a regulatory subunit.</text>
</comment>
<comment type="catalytic activity">
    <reaction evidence="1">
        <text>ATP + H2O + 4 H(+)(in) = ADP + phosphate + 5 H(+)(out)</text>
        <dbReference type="Rhea" id="RHEA:57720"/>
        <dbReference type="ChEBI" id="CHEBI:15377"/>
        <dbReference type="ChEBI" id="CHEBI:15378"/>
        <dbReference type="ChEBI" id="CHEBI:30616"/>
        <dbReference type="ChEBI" id="CHEBI:43474"/>
        <dbReference type="ChEBI" id="CHEBI:456216"/>
        <dbReference type="EC" id="7.1.2.2"/>
    </reaction>
</comment>
<comment type="subunit">
    <text evidence="1">F-type ATPases have 2 components, CF(1) - the catalytic core - and CF(0) - the membrane proton channel. CF(1) has five subunits: alpha(3), beta(3), gamma(1), delta(1), epsilon(1). CF(0) has four main subunits: a, b, b' and c.</text>
</comment>
<comment type="subcellular location">
    <subcellularLocation>
        <location evidence="1">Plastid</location>
        <location evidence="1">Chloroplast thylakoid membrane</location>
        <topology evidence="1">Peripheral membrane protein</topology>
    </subcellularLocation>
</comment>
<comment type="similarity">
    <text evidence="1">Belongs to the ATPase alpha/beta chains family.</text>
</comment>
<proteinExistence type="inferred from homology"/>
<evidence type="ECO:0000255" key="1">
    <source>
        <dbReference type="HAMAP-Rule" id="MF_01346"/>
    </source>
</evidence>
<gene>
    <name evidence="1" type="primary">atpA</name>
</gene>
<dbReference type="EC" id="7.1.2.2" evidence="1"/>
<dbReference type="EMBL" id="AP004638">
    <property type="protein sequence ID" value="BAB84201.1"/>
    <property type="molecule type" value="Genomic_DNA"/>
</dbReference>
<dbReference type="RefSeq" id="NP_569614.1">
    <property type="nucleotide sequence ID" value="NC_003386.1"/>
</dbReference>
<dbReference type="SMR" id="Q8WI30"/>
<dbReference type="GeneID" id="2545104"/>
<dbReference type="GO" id="GO:0009535">
    <property type="term" value="C:chloroplast thylakoid membrane"/>
    <property type="evidence" value="ECO:0007669"/>
    <property type="project" value="UniProtKB-SubCell"/>
</dbReference>
<dbReference type="GO" id="GO:0045259">
    <property type="term" value="C:proton-transporting ATP synthase complex"/>
    <property type="evidence" value="ECO:0007669"/>
    <property type="project" value="UniProtKB-KW"/>
</dbReference>
<dbReference type="GO" id="GO:0043531">
    <property type="term" value="F:ADP binding"/>
    <property type="evidence" value="ECO:0007669"/>
    <property type="project" value="TreeGrafter"/>
</dbReference>
<dbReference type="GO" id="GO:0005524">
    <property type="term" value="F:ATP binding"/>
    <property type="evidence" value="ECO:0007669"/>
    <property type="project" value="UniProtKB-UniRule"/>
</dbReference>
<dbReference type="GO" id="GO:0046933">
    <property type="term" value="F:proton-transporting ATP synthase activity, rotational mechanism"/>
    <property type="evidence" value="ECO:0007669"/>
    <property type="project" value="UniProtKB-UniRule"/>
</dbReference>
<dbReference type="CDD" id="cd18113">
    <property type="entry name" value="ATP-synt_F1_alpha_C"/>
    <property type="match status" value="1"/>
</dbReference>
<dbReference type="CDD" id="cd18116">
    <property type="entry name" value="ATP-synt_F1_alpha_N"/>
    <property type="match status" value="1"/>
</dbReference>
<dbReference type="CDD" id="cd01132">
    <property type="entry name" value="F1-ATPase_alpha_CD"/>
    <property type="match status" value="1"/>
</dbReference>
<dbReference type="FunFam" id="1.20.150.20:FF:000001">
    <property type="entry name" value="ATP synthase subunit alpha"/>
    <property type="match status" value="1"/>
</dbReference>
<dbReference type="FunFam" id="2.40.30.20:FF:000001">
    <property type="entry name" value="ATP synthase subunit alpha"/>
    <property type="match status" value="1"/>
</dbReference>
<dbReference type="FunFam" id="3.40.50.300:FF:000002">
    <property type="entry name" value="ATP synthase subunit alpha"/>
    <property type="match status" value="1"/>
</dbReference>
<dbReference type="Gene3D" id="2.40.30.20">
    <property type="match status" value="1"/>
</dbReference>
<dbReference type="Gene3D" id="1.20.150.20">
    <property type="entry name" value="ATP synthase alpha/beta chain, C-terminal domain"/>
    <property type="match status" value="1"/>
</dbReference>
<dbReference type="Gene3D" id="3.40.50.300">
    <property type="entry name" value="P-loop containing nucleotide triphosphate hydrolases"/>
    <property type="match status" value="1"/>
</dbReference>
<dbReference type="HAMAP" id="MF_01346">
    <property type="entry name" value="ATP_synth_alpha_bact"/>
    <property type="match status" value="1"/>
</dbReference>
<dbReference type="InterPro" id="IPR023366">
    <property type="entry name" value="ATP_synth_asu-like_sf"/>
</dbReference>
<dbReference type="InterPro" id="IPR000793">
    <property type="entry name" value="ATP_synth_asu_C"/>
</dbReference>
<dbReference type="InterPro" id="IPR038376">
    <property type="entry name" value="ATP_synth_asu_C_sf"/>
</dbReference>
<dbReference type="InterPro" id="IPR033732">
    <property type="entry name" value="ATP_synth_F1_a_nt-bd_dom"/>
</dbReference>
<dbReference type="InterPro" id="IPR005294">
    <property type="entry name" value="ATP_synth_F1_asu"/>
</dbReference>
<dbReference type="InterPro" id="IPR020003">
    <property type="entry name" value="ATPase_a/bsu_AS"/>
</dbReference>
<dbReference type="InterPro" id="IPR004100">
    <property type="entry name" value="ATPase_F1/V1/A1_a/bsu_N"/>
</dbReference>
<dbReference type="InterPro" id="IPR036121">
    <property type="entry name" value="ATPase_F1/V1/A1_a/bsu_N_sf"/>
</dbReference>
<dbReference type="InterPro" id="IPR000194">
    <property type="entry name" value="ATPase_F1/V1/A1_a/bsu_nucl-bd"/>
</dbReference>
<dbReference type="InterPro" id="IPR027417">
    <property type="entry name" value="P-loop_NTPase"/>
</dbReference>
<dbReference type="NCBIfam" id="TIGR00962">
    <property type="entry name" value="atpA"/>
    <property type="match status" value="1"/>
</dbReference>
<dbReference type="NCBIfam" id="NF009884">
    <property type="entry name" value="PRK13343.1"/>
    <property type="match status" value="1"/>
</dbReference>
<dbReference type="PANTHER" id="PTHR48082">
    <property type="entry name" value="ATP SYNTHASE SUBUNIT ALPHA, MITOCHONDRIAL"/>
    <property type="match status" value="1"/>
</dbReference>
<dbReference type="PANTHER" id="PTHR48082:SF2">
    <property type="entry name" value="ATP SYNTHASE SUBUNIT ALPHA, MITOCHONDRIAL"/>
    <property type="match status" value="1"/>
</dbReference>
<dbReference type="Pfam" id="PF00006">
    <property type="entry name" value="ATP-synt_ab"/>
    <property type="match status" value="1"/>
</dbReference>
<dbReference type="Pfam" id="PF00306">
    <property type="entry name" value="ATP-synt_ab_C"/>
    <property type="match status" value="1"/>
</dbReference>
<dbReference type="Pfam" id="PF02874">
    <property type="entry name" value="ATP-synt_ab_N"/>
    <property type="match status" value="1"/>
</dbReference>
<dbReference type="PIRSF" id="PIRSF039088">
    <property type="entry name" value="F_ATPase_subunit_alpha"/>
    <property type="match status" value="1"/>
</dbReference>
<dbReference type="SUPFAM" id="SSF47917">
    <property type="entry name" value="C-terminal domain of alpha and beta subunits of F1 ATP synthase"/>
    <property type="match status" value="1"/>
</dbReference>
<dbReference type="SUPFAM" id="SSF50615">
    <property type="entry name" value="N-terminal domain of alpha and beta subunits of F1 ATP synthase"/>
    <property type="match status" value="1"/>
</dbReference>
<dbReference type="SUPFAM" id="SSF52540">
    <property type="entry name" value="P-loop containing nucleoside triphosphate hydrolases"/>
    <property type="match status" value="1"/>
</dbReference>
<dbReference type="PROSITE" id="PS00152">
    <property type="entry name" value="ATPASE_ALPHA_BETA"/>
    <property type="match status" value="1"/>
</dbReference>
<geneLocation type="chloroplast"/>
<keyword id="KW-0066">ATP synthesis</keyword>
<keyword id="KW-0067">ATP-binding</keyword>
<keyword id="KW-0139">CF(1)</keyword>
<keyword id="KW-0150">Chloroplast</keyword>
<keyword id="KW-0375">Hydrogen ion transport</keyword>
<keyword id="KW-0406">Ion transport</keyword>
<keyword id="KW-0472">Membrane</keyword>
<keyword id="KW-0547">Nucleotide-binding</keyword>
<keyword id="KW-0934">Plastid</keyword>
<keyword id="KW-0793">Thylakoid</keyword>
<keyword id="KW-1278">Translocase</keyword>
<keyword id="KW-0813">Transport</keyword>